<gene>
    <name evidence="1" type="primary">pyrG</name>
    <name type="ordered locus">Mbar_A3518</name>
</gene>
<feature type="chain" id="PRO_0000266275" description="CTP synthase">
    <location>
        <begin position="1"/>
        <end position="534"/>
    </location>
</feature>
<feature type="domain" description="Glutamine amidotransferase type-1" evidence="1">
    <location>
        <begin position="289"/>
        <end position="530"/>
    </location>
</feature>
<feature type="region of interest" description="Amidoligase domain" evidence="1">
    <location>
        <begin position="1"/>
        <end position="265"/>
    </location>
</feature>
<feature type="active site" description="Nucleophile; for glutamine hydrolysis" evidence="1">
    <location>
        <position position="379"/>
    </location>
</feature>
<feature type="active site" evidence="1">
    <location>
        <position position="503"/>
    </location>
</feature>
<feature type="active site" evidence="1">
    <location>
        <position position="505"/>
    </location>
</feature>
<feature type="binding site" evidence="1">
    <location>
        <position position="12"/>
    </location>
    <ligand>
        <name>CTP</name>
        <dbReference type="ChEBI" id="CHEBI:37563"/>
        <note>allosteric inhibitor</note>
    </ligand>
</feature>
<feature type="binding site" evidence="1">
    <location>
        <position position="12"/>
    </location>
    <ligand>
        <name>UTP</name>
        <dbReference type="ChEBI" id="CHEBI:46398"/>
    </ligand>
</feature>
<feature type="binding site" evidence="1">
    <location>
        <begin position="13"/>
        <end position="18"/>
    </location>
    <ligand>
        <name>ATP</name>
        <dbReference type="ChEBI" id="CHEBI:30616"/>
    </ligand>
</feature>
<feature type="binding site" evidence="1">
    <location>
        <position position="53"/>
    </location>
    <ligand>
        <name>L-glutamine</name>
        <dbReference type="ChEBI" id="CHEBI:58359"/>
    </ligand>
</feature>
<feature type="binding site" evidence="1">
    <location>
        <position position="70"/>
    </location>
    <ligand>
        <name>ATP</name>
        <dbReference type="ChEBI" id="CHEBI:30616"/>
    </ligand>
</feature>
<feature type="binding site" evidence="1">
    <location>
        <position position="70"/>
    </location>
    <ligand>
        <name>Mg(2+)</name>
        <dbReference type="ChEBI" id="CHEBI:18420"/>
    </ligand>
</feature>
<feature type="binding site" evidence="1">
    <location>
        <position position="140"/>
    </location>
    <ligand>
        <name>Mg(2+)</name>
        <dbReference type="ChEBI" id="CHEBI:18420"/>
    </ligand>
</feature>
<feature type="binding site" evidence="1">
    <location>
        <begin position="147"/>
        <end position="149"/>
    </location>
    <ligand>
        <name>CTP</name>
        <dbReference type="ChEBI" id="CHEBI:37563"/>
        <note>allosteric inhibitor</note>
    </ligand>
</feature>
<feature type="binding site" evidence="1">
    <location>
        <begin position="186"/>
        <end position="191"/>
    </location>
    <ligand>
        <name>CTP</name>
        <dbReference type="ChEBI" id="CHEBI:37563"/>
        <note>allosteric inhibitor</note>
    </ligand>
</feature>
<feature type="binding site" evidence="1">
    <location>
        <begin position="186"/>
        <end position="191"/>
    </location>
    <ligand>
        <name>UTP</name>
        <dbReference type="ChEBI" id="CHEBI:46398"/>
    </ligand>
</feature>
<feature type="binding site" evidence="1">
    <location>
        <position position="222"/>
    </location>
    <ligand>
        <name>CTP</name>
        <dbReference type="ChEBI" id="CHEBI:37563"/>
        <note>allosteric inhibitor</note>
    </ligand>
</feature>
<feature type="binding site" evidence="1">
    <location>
        <position position="222"/>
    </location>
    <ligand>
        <name>UTP</name>
        <dbReference type="ChEBI" id="CHEBI:46398"/>
    </ligand>
</feature>
<feature type="binding site" evidence="1">
    <location>
        <position position="352"/>
    </location>
    <ligand>
        <name>L-glutamine</name>
        <dbReference type="ChEBI" id="CHEBI:58359"/>
    </ligand>
</feature>
<feature type="binding site" evidence="1">
    <location>
        <begin position="380"/>
        <end position="383"/>
    </location>
    <ligand>
        <name>L-glutamine</name>
        <dbReference type="ChEBI" id="CHEBI:58359"/>
    </ligand>
</feature>
<feature type="binding site" evidence="1">
    <location>
        <position position="403"/>
    </location>
    <ligand>
        <name>L-glutamine</name>
        <dbReference type="ChEBI" id="CHEBI:58359"/>
    </ligand>
</feature>
<feature type="binding site" evidence="1">
    <location>
        <position position="460"/>
    </location>
    <ligand>
        <name>L-glutamine</name>
        <dbReference type="ChEBI" id="CHEBI:58359"/>
    </ligand>
</feature>
<accession>Q465Q4</accession>
<name>PYRG_METBF</name>
<evidence type="ECO:0000255" key="1">
    <source>
        <dbReference type="HAMAP-Rule" id="MF_01227"/>
    </source>
</evidence>
<dbReference type="EC" id="6.3.4.2" evidence="1"/>
<dbReference type="EMBL" id="CP000099">
    <property type="protein sequence ID" value="AAZ72388.1"/>
    <property type="molecule type" value="Genomic_DNA"/>
</dbReference>
<dbReference type="SMR" id="Q465Q4"/>
<dbReference type="STRING" id="269797.Mbar_A3518"/>
<dbReference type="PaxDb" id="269797-Mbar_A3518"/>
<dbReference type="KEGG" id="mba:Mbar_A3518"/>
<dbReference type="eggNOG" id="arCOG00063">
    <property type="taxonomic scope" value="Archaea"/>
</dbReference>
<dbReference type="HOGENOM" id="CLU_011675_5_0_2"/>
<dbReference type="OrthoDB" id="52769at2157"/>
<dbReference type="UniPathway" id="UPA00159">
    <property type="reaction ID" value="UER00277"/>
</dbReference>
<dbReference type="GO" id="GO:0005524">
    <property type="term" value="F:ATP binding"/>
    <property type="evidence" value="ECO:0007669"/>
    <property type="project" value="UniProtKB-KW"/>
</dbReference>
<dbReference type="GO" id="GO:0003883">
    <property type="term" value="F:CTP synthase activity"/>
    <property type="evidence" value="ECO:0007669"/>
    <property type="project" value="UniProtKB-UniRule"/>
</dbReference>
<dbReference type="GO" id="GO:0004359">
    <property type="term" value="F:glutaminase activity"/>
    <property type="evidence" value="ECO:0007669"/>
    <property type="project" value="RHEA"/>
</dbReference>
<dbReference type="GO" id="GO:0042802">
    <property type="term" value="F:identical protein binding"/>
    <property type="evidence" value="ECO:0007669"/>
    <property type="project" value="TreeGrafter"/>
</dbReference>
<dbReference type="GO" id="GO:0046872">
    <property type="term" value="F:metal ion binding"/>
    <property type="evidence" value="ECO:0007669"/>
    <property type="project" value="UniProtKB-KW"/>
</dbReference>
<dbReference type="GO" id="GO:0044210">
    <property type="term" value="P:'de novo' CTP biosynthetic process"/>
    <property type="evidence" value="ECO:0007669"/>
    <property type="project" value="UniProtKB-UniRule"/>
</dbReference>
<dbReference type="GO" id="GO:0019856">
    <property type="term" value="P:pyrimidine nucleobase biosynthetic process"/>
    <property type="evidence" value="ECO:0007669"/>
    <property type="project" value="TreeGrafter"/>
</dbReference>
<dbReference type="CDD" id="cd03113">
    <property type="entry name" value="CTPS_N"/>
    <property type="match status" value="1"/>
</dbReference>
<dbReference type="CDD" id="cd01746">
    <property type="entry name" value="GATase1_CTP_Synthase"/>
    <property type="match status" value="1"/>
</dbReference>
<dbReference type="FunFam" id="3.40.50.300:FF:000009">
    <property type="entry name" value="CTP synthase"/>
    <property type="match status" value="1"/>
</dbReference>
<dbReference type="FunFam" id="3.40.50.880:FF:000002">
    <property type="entry name" value="CTP synthase"/>
    <property type="match status" value="1"/>
</dbReference>
<dbReference type="Gene3D" id="3.40.50.880">
    <property type="match status" value="1"/>
</dbReference>
<dbReference type="Gene3D" id="3.40.50.300">
    <property type="entry name" value="P-loop containing nucleotide triphosphate hydrolases"/>
    <property type="match status" value="1"/>
</dbReference>
<dbReference type="HAMAP" id="MF_01227">
    <property type="entry name" value="PyrG"/>
    <property type="match status" value="1"/>
</dbReference>
<dbReference type="InterPro" id="IPR029062">
    <property type="entry name" value="Class_I_gatase-like"/>
</dbReference>
<dbReference type="InterPro" id="IPR004468">
    <property type="entry name" value="CTP_synthase"/>
</dbReference>
<dbReference type="InterPro" id="IPR017456">
    <property type="entry name" value="CTP_synthase_N"/>
</dbReference>
<dbReference type="InterPro" id="IPR017926">
    <property type="entry name" value="GATASE"/>
</dbReference>
<dbReference type="InterPro" id="IPR033828">
    <property type="entry name" value="GATase1_CTP_Synthase"/>
</dbReference>
<dbReference type="InterPro" id="IPR027417">
    <property type="entry name" value="P-loop_NTPase"/>
</dbReference>
<dbReference type="NCBIfam" id="NF003792">
    <property type="entry name" value="PRK05380.1"/>
    <property type="match status" value="1"/>
</dbReference>
<dbReference type="NCBIfam" id="TIGR00337">
    <property type="entry name" value="PyrG"/>
    <property type="match status" value="1"/>
</dbReference>
<dbReference type="PANTHER" id="PTHR11550">
    <property type="entry name" value="CTP SYNTHASE"/>
    <property type="match status" value="1"/>
</dbReference>
<dbReference type="PANTHER" id="PTHR11550:SF0">
    <property type="entry name" value="CTP SYNTHASE-RELATED"/>
    <property type="match status" value="1"/>
</dbReference>
<dbReference type="Pfam" id="PF06418">
    <property type="entry name" value="CTP_synth_N"/>
    <property type="match status" value="1"/>
</dbReference>
<dbReference type="Pfam" id="PF00117">
    <property type="entry name" value="GATase"/>
    <property type="match status" value="1"/>
</dbReference>
<dbReference type="SUPFAM" id="SSF52317">
    <property type="entry name" value="Class I glutamine amidotransferase-like"/>
    <property type="match status" value="1"/>
</dbReference>
<dbReference type="SUPFAM" id="SSF52540">
    <property type="entry name" value="P-loop containing nucleoside triphosphate hydrolases"/>
    <property type="match status" value="1"/>
</dbReference>
<dbReference type="PROSITE" id="PS51273">
    <property type="entry name" value="GATASE_TYPE_1"/>
    <property type="match status" value="1"/>
</dbReference>
<sequence>MKYIIVTGGVMSGLGKGITIASIGRNLKDKGYKVTAIKIDPYINIDAGTMSPYQHGEVFVLKDGGEVDLDLGNYERFLDTELTRDHNLTTGKIYLEVISKERRGDYLGKTVQIIPHVTNEIKSRIRKVAARSGADICLIEIGGTVGDIESMPFLEAVRQMHREEPSENIAFIHVTLAMEDLQGEQKTKPSQHSVKELRALGLSPEVIVVRSKSPLQESAKEKIALFCDVPQELVISAHDADDIYEVPLEIEEQGLTTQLMKHLQLESSVENGAWKKMVSRMHSTTNTVKLAIVGKYTNLEDSYLSILEAVKHGGIDNGCRVEVNMVEAEILEENPAEIEKLIQYDGILIPGGFGGRGTEGKMMAIKFARENDIPFLGICLGMQLAVIEFARNVAKLKGANSTEFDEDSPYPVIDLLPEQTGVAEMGGTMRLGDYEAILTEGSIAAKIYGTNYIVERHRHRYEVNPEFVDRLESYGIVFSGKNKNRMEIAEIPGKRFFFGSQFHPEFRSRPGRPSPPFNGLVAAMCKYRKEREGR</sequence>
<keyword id="KW-0067">ATP-binding</keyword>
<keyword id="KW-0315">Glutamine amidotransferase</keyword>
<keyword id="KW-0436">Ligase</keyword>
<keyword id="KW-0460">Magnesium</keyword>
<keyword id="KW-0479">Metal-binding</keyword>
<keyword id="KW-0547">Nucleotide-binding</keyword>
<keyword id="KW-0665">Pyrimidine biosynthesis</keyword>
<organism>
    <name type="scientific">Methanosarcina barkeri (strain Fusaro / DSM 804)</name>
    <dbReference type="NCBI Taxonomy" id="269797"/>
    <lineage>
        <taxon>Archaea</taxon>
        <taxon>Methanobacteriati</taxon>
        <taxon>Methanobacteriota</taxon>
        <taxon>Stenosarchaea group</taxon>
        <taxon>Methanomicrobia</taxon>
        <taxon>Methanosarcinales</taxon>
        <taxon>Methanosarcinaceae</taxon>
        <taxon>Methanosarcina</taxon>
    </lineage>
</organism>
<reference key="1">
    <citation type="journal article" date="2006" name="J. Bacteriol.">
        <title>The Methanosarcina barkeri genome: comparative analysis with Methanosarcina acetivorans and Methanosarcina mazei reveals extensive rearrangement within methanosarcinal genomes.</title>
        <authorList>
            <person name="Maeder D.L."/>
            <person name="Anderson I."/>
            <person name="Brettin T.S."/>
            <person name="Bruce D.C."/>
            <person name="Gilna P."/>
            <person name="Han C.S."/>
            <person name="Lapidus A."/>
            <person name="Metcalf W.W."/>
            <person name="Saunders E."/>
            <person name="Tapia R."/>
            <person name="Sowers K.R."/>
        </authorList>
    </citation>
    <scope>NUCLEOTIDE SEQUENCE [LARGE SCALE GENOMIC DNA]</scope>
    <source>
        <strain>Fusaro / DSM 804</strain>
    </source>
</reference>
<proteinExistence type="inferred from homology"/>
<protein>
    <recommendedName>
        <fullName evidence="1">CTP synthase</fullName>
        <ecNumber evidence="1">6.3.4.2</ecNumber>
    </recommendedName>
    <alternativeName>
        <fullName evidence="1">Cytidine 5'-triphosphate synthase</fullName>
    </alternativeName>
    <alternativeName>
        <fullName evidence="1">Cytidine triphosphate synthetase</fullName>
        <shortName evidence="1">CTP synthetase</shortName>
        <shortName evidence="1">CTPS</shortName>
    </alternativeName>
    <alternativeName>
        <fullName evidence="1">UTP--ammonia ligase</fullName>
    </alternativeName>
</protein>
<comment type="function">
    <text evidence="1">Catalyzes the ATP-dependent amination of UTP to CTP with either L-glutamine or ammonia as the source of nitrogen. Regulates intracellular CTP levels through interactions with the four ribonucleotide triphosphates.</text>
</comment>
<comment type="catalytic activity">
    <reaction evidence="1">
        <text>UTP + L-glutamine + ATP + H2O = CTP + L-glutamate + ADP + phosphate + 2 H(+)</text>
        <dbReference type="Rhea" id="RHEA:26426"/>
        <dbReference type="ChEBI" id="CHEBI:15377"/>
        <dbReference type="ChEBI" id="CHEBI:15378"/>
        <dbReference type="ChEBI" id="CHEBI:29985"/>
        <dbReference type="ChEBI" id="CHEBI:30616"/>
        <dbReference type="ChEBI" id="CHEBI:37563"/>
        <dbReference type="ChEBI" id="CHEBI:43474"/>
        <dbReference type="ChEBI" id="CHEBI:46398"/>
        <dbReference type="ChEBI" id="CHEBI:58359"/>
        <dbReference type="ChEBI" id="CHEBI:456216"/>
        <dbReference type="EC" id="6.3.4.2"/>
    </reaction>
</comment>
<comment type="catalytic activity">
    <reaction evidence="1">
        <text>L-glutamine + H2O = L-glutamate + NH4(+)</text>
        <dbReference type="Rhea" id="RHEA:15889"/>
        <dbReference type="ChEBI" id="CHEBI:15377"/>
        <dbReference type="ChEBI" id="CHEBI:28938"/>
        <dbReference type="ChEBI" id="CHEBI:29985"/>
        <dbReference type="ChEBI" id="CHEBI:58359"/>
    </reaction>
</comment>
<comment type="catalytic activity">
    <reaction evidence="1">
        <text>UTP + NH4(+) + ATP = CTP + ADP + phosphate + 2 H(+)</text>
        <dbReference type="Rhea" id="RHEA:16597"/>
        <dbReference type="ChEBI" id="CHEBI:15378"/>
        <dbReference type="ChEBI" id="CHEBI:28938"/>
        <dbReference type="ChEBI" id="CHEBI:30616"/>
        <dbReference type="ChEBI" id="CHEBI:37563"/>
        <dbReference type="ChEBI" id="CHEBI:43474"/>
        <dbReference type="ChEBI" id="CHEBI:46398"/>
        <dbReference type="ChEBI" id="CHEBI:456216"/>
    </reaction>
</comment>
<comment type="activity regulation">
    <text evidence="1">Allosterically activated by GTP, when glutamine is the substrate; GTP has no effect on the reaction when ammonia is the substrate. The allosteric effector GTP functions by stabilizing the protein conformation that binds the tetrahedral intermediate(s) formed during glutamine hydrolysis. Inhibited by the product CTP, via allosteric rather than competitive inhibition.</text>
</comment>
<comment type="pathway">
    <text evidence="1">Pyrimidine metabolism; CTP biosynthesis via de novo pathway; CTP from UDP: step 2/2.</text>
</comment>
<comment type="subunit">
    <text evidence="1">Homotetramer.</text>
</comment>
<comment type="miscellaneous">
    <text evidence="1">CTPSs have evolved a hybrid strategy for distinguishing between UTP and CTP. The overlapping regions of the product feedback inhibitory and substrate sites recognize a common feature in both compounds, the triphosphate moiety. To differentiate isosteric substrate and product pyrimidine rings, an additional pocket far from the expected kinase/ligase catalytic site, specifically recognizes the cytosine and ribose portions of the product inhibitor.</text>
</comment>
<comment type="similarity">
    <text evidence="1">Belongs to the CTP synthase family.</text>
</comment>